<reference key="1">
    <citation type="submission" date="2006-08" db="EMBL/GenBank/DDBJ databases">
        <title>Positive selection in transcription factor genes on the human lineage.</title>
        <authorList>
            <person name="Nickel G.C."/>
            <person name="Tefft D.L."/>
            <person name="Trevarthen K."/>
            <person name="Funt J."/>
            <person name="Adams M.D."/>
        </authorList>
    </citation>
    <scope>NUCLEOTIDE SEQUENCE [GENOMIC DNA]</scope>
</reference>
<organism>
    <name type="scientific">Gorilla gorilla gorilla</name>
    <name type="common">Western lowland gorilla</name>
    <dbReference type="NCBI Taxonomy" id="9595"/>
    <lineage>
        <taxon>Eukaryota</taxon>
        <taxon>Metazoa</taxon>
        <taxon>Chordata</taxon>
        <taxon>Craniata</taxon>
        <taxon>Vertebrata</taxon>
        <taxon>Euteleostomi</taxon>
        <taxon>Mammalia</taxon>
        <taxon>Eutheria</taxon>
        <taxon>Euarchontoglires</taxon>
        <taxon>Primates</taxon>
        <taxon>Haplorrhini</taxon>
        <taxon>Catarrhini</taxon>
        <taxon>Hominidae</taxon>
        <taxon>Gorilla</taxon>
    </lineage>
</organism>
<protein>
    <recommendedName>
        <fullName>T-box transcription factor TBX6</fullName>
        <shortName>T-box protein 6</shortName>
    </recommendedName>
</protein>
<dbReference type="EMBL" id="DQ976526">
    <property type="protein sequence ID" value="ABM46774.1"/>
    <property type="molecule type" value="Genomic_DNA"/>
</dbReference>
<dbReference type="RefSeq" id="XP_018867264.2">
    <property type="nucleotide sequence ID" value="XM_019011719.2"/>
</dbReference>
<dbReference type="RefSeq" id="XP_055221752.1">
    <property type="nucleotide sequence ID" value="XM_055365777.2"/>
</dbReference>
<dbReference type="SMR" id="A1YF56"/>
<dbReference type="FunCoup" id="A1YF56">
    <property type="interactions" value="144"/>
</dbReference>
<dbReference type="STRING" id="9593.ENSGGOP00000012606"/>
<dbReference type="GeneID" id="101128452"/>
<dbReference type="eggNOG" id="KOG3585">
    <property type="taxonomic scope" value="Eukaryota"/>
</dbReference>
<dbReference type="HOGENOM" id="CLU_052181_0_0_1"/>
<dbReference type="InParanoid" id="A1YF56"/>
<dbReference type="Proteomes" id="UP000001519">
    <property type="component" value="Unplaced"/>
</dbReference>
<dbReference type="GO" id="GO:0000785">
    <property type="term" value="C:chromatin"/>
    <property type="evidence" value="ECO:0000318"/>
    <property type="project" value="GO_Central"/>
</dbReference>
<dbReference type="GO" id="GO:0005634">
    <property type="term" value="C:nucleus"/>
    <property type="evidence" value="ECO:0000318"/>
    <property type="project" value="GO_Central"/>
</dbReference>
<dbReference type="GO" id="GO:0000981">
    <property type="term" value="F:DNA-binding transcription factor activity, RNA polymerase II-specific"/>
    <property type="evidence" value="ECO:0000318"/>
    <property type="project" value="GO_Central"/>
</dbReference>
<dbReference type="GO" id="GO:0000978">
    <property type="term" value="F:RNA polymerase II cis-regulatory region sequence-specific DNA binding"/>
    <property type="evidence" value="ECO:0000318"/>
    <property type="project" value="GO_Central"/>
</dbReference>
<dbReference type="GO" id="GO:0001708">
    <property type="term" value="P:cell fate specification"/>
    <property type="evidence" value="ECO:0000318"/>
    <property type="project" value="GO_Central"/>
</dbReference>
<dbReference type="GO" id="GO:0045893">
    <property type="term" value="P:positive regulation of DNA-templated transcription"/>
    <property type="evidence" value="ECO:0007669"/>
    <property type="project" value="InterPro"/>
</dbReference>
<dbReference type="GO" id="GO:0006357">
    <property type="term" value="P:regulation of transcription by RNA polymerase II"/>
    <property type="evidence" value="ECO:0000318"/>
    <property type="project" value="GO_Central"/>
</dbReference>
<dbReference type="CDD" id="cd20190">
    <property type="entry name" value="T-box_TBX6_VegT-like"/>
    <property type="match status" value="1"/>
</dbReference>
<dbReference type="FunFam" id="2.60.40.820:FF:000007">
    <property type="entry name" value="T-box transcription factor"/>
    <property type="match status" value="1"/>
</dbReference>
<dbReference type="Gene3D" id="2.60.40.820">
    <property type="entry name" value="Transcription factor, T-box"/>
    <property type="match status" value="1"/>
</dbReference>
<dbReference type="InterPro" id="IPR008967">
    <property type="entry name" value="p53-like_TF_DNA-bd_sf"/>
</dbReference>
<dbReference type="InterPro" id="IPR046360">
    <property type="entry name" value="T-box_DNA-bd"/>
</dbReference>
<dbReference type="InterPro" id="IPR036960">
    <property type="entry name" value="T-box_sf"/>
</dbReference>
<dbReference type="InterPro" id="IPR001699">
    <property type="entry name" value="TF_T-box"/>
</dbReference>
<dbReference type="InterPro" id="IPR018186">
    <property type="entry name" value="TF_T-box_CS"/>
</dbReference>
<dbReference type="PANTHER" id="PTHR11267">
    <property type="entry name" value="T-BOX PROTEIN-RELATED"/>
    <property type="match status" value="1"/>
</dbReference>
<dbReference type="PANTHER" id="PTHR11267:SF100">
    <property type="entry name" value="T-BOX TRANSCRIPTION FACTOR TBX6"/>
    <property type="match status" value="1"/>
</dbReference>
<dbReference type="Pfam" id="PF00907">
    <property type="entry name" value="T-box"/>
    <property type="match status" value="1"/>
</dbReference>
<dbReference type="PRINTS" id="PR00937">
    <property type="entry name" value="TBOX"/>
</dbReference>
<dbReference type="SMART" id="SM00425">
    <property type="entry name" value="TBOX"/>
    <property type="match status" value="1"/>
</dbReference>
<dbReference type="SUPFAM" id="SSF49417">
    <property type="entry name" value="p53-like transcription factors"/>
    <property type="match status" value="1"/>
</dbReference>
<dbReference type="PROSITE" id="PS01283">
    <property type="entry name" value="TBOX_1"/>
    <property type="match status" value="1"/>
</dbReference>
<dbReference type="PROSITE" id="PS01264">
    <property type="entry name" value="TBOX_2"/>
    <property type="match status" value="1"/>
</dbReference>
<dbReference type="PROSITE" id="PS50252">
    <property type="entry name" value="TBOX_3"/>
    <property type="match status" value="1"/>
</dbReference>
<keyword id="KW-0217">Developmental protein</keyword>
<keyword id="KW-0238">DNA-binding</keyword>
<keyword id="KW-0539">Nucleus</keyword>
<keyword id="KW-1185">Reference proteome</keyword>
<keyword id="KW-0804">Transcription</keyword>
<keyword id="KW-0805">Transcription regulation</keyword>
<sequence length="436" mass="46960">MYHPRELYPSLGAGYRLGPAQPGADSSFPPALAEGYRYPELDTPKLDCFLSGMEAAPRTLAAHPPLPLLPPAMGTEPAPSAPEALHSLPGVSLSLENRELWKEFSSVGTEMIITKAGRRMFPACRVSVTGLDPEARYLFLLDVIPVDGARYRWQGRCWEPSGKAEPRLPDRVYIHPDSPATGAHWMRQPVSFHRVKLTNSTLDPHGHLILHSMHKYQPRIHLVRAAQLCSQHWGGMASFRFPETTFISVTAYQNPRITQLKIAANPFAKGFRENGRNCKRERDARVKRKLRGPEPAATEACGSGDTPGGPCDSTLGGDIRESDPEQAPAPGEATAAPAPLCGGPSAEAYLLHPAAFHGAPSHLPTRSPSFPEAPDSGRSAPYSAAFLELPHGSGGSGYPAAPPAVPFAPHFLQGGPFPLPYTAPGGYLDVGSKPMY</sequence>
<feature type="chain" id="PRO_0000285491" description="T-box transcription factor TBX6">
    <location>
        <begin position="1"/>
        <end position="436"/>
    </location>
</feature>
<feature type="DNA-binding region" description="T-box" evidence="2">
    <location>
        <begin position="100"/>
        <end position="273"/>
    </location>
</feature>
<feature type="region of interest" description="Disordered" evidence="3">
    <location>
        <begin position="274"/>
        <end position="339"/>
    </location>
</feature>
<feature type="region of interest" description="Disordered" evidence="3">
    <location>
        <begin position="360"/>
        <end position="379"/>
    </location>
</feature>
<feature type="compositionally biased region" description="Basic and acidic residues" evidence="3">
    <location>
        <begin position="274"/>
        <end position="284"/>
    </location>
</feature>
<feature type="compositionally biased region" description="Low complexity" evidence="3">
    <location>
        <begin position="325"/>
        <end position="339"/>
    </location>
</feature>
<gene>
    <name type="primary">TBX6</name>
</gene>
<comment type="function">
    <text evidence="1">T-box transcription factor that plays an essential role in the determination of the fate of axial stem cells: neural vs mesodermal. Acts in part by down-regulating, a specific enhancer (N1) of SOX2, to inhibit neural development. Seems to play also an essential role in left/right axis determination and acts through effects on Notch signaling around the node as well as through an effect on the morphology and motility of the nodal cilia (By similarity).</text>
</comment>
<comment type="subunit">
    <text evidence="1">Forms a dimeric complex with DNA (in vitro).</text>
</comment>
<comment type="subcellular location">
    <subcellularLocation>
        <location evidence="2">Nucleus</location>
    </subcellularLocation>
</comment>
<name>TBX6_GORGO</name>
<evidence type="ECO:0000250" key="1"/>
<evidence type="ECO:0000255" key="2">
    <source>
        <dbReference type="PROSITE-ProRule" id="PRU00201"/>
    </source>
</evidence>
<evidence type="ECO:0000256" key="3">
    <source>
        <dbReference type="SAM" id="MobiDB-lite"/>
    </source>
</evidence>
<proteinExistence type="inferred from homology"/>
<accession>A1YF56</accession>